<sequence>MGQVLPLVTRQGDRIAIVSGLRTPFARQATAFHGIPAVDLGKMVVGELLARSEIPAEVIEQLVFGQVVQMPEAPNIAREIVLGTGMNVHTDAYSVSRACATSFQAVANVAESLMAGTIRAGIAGGADSSSVLPIGVSKKLARVLVDVNKARTMSQRLKLFSRLRLRDLMPVPPAVAEYSTGLRMGDTAEQMAKTYGITREQQDALAHRSHQRAAQSWSEGKLKEEVMTAFIPPYKQLLAEDNNICGNSSLADYAKLRPAFDRKHGTVTAANSTPLTDGAAAVILMTESRTKELGLVPLGYLRSYAFTAIDVWQDMLLGPAWSTPLALERAGLTMADLTLIDMHEAFAAQTLANIQLLGSERFACNVLGRAHATGEVDDSKFNVLGGSIAYGHPFAATGARIITQTLHELRRRGGGFGLVTACAAGGLGAAMVLEAE</sequence>
<protein>
    <recommendedName>
        <fullName evidence="1">3-ketoacyl-CoA thiolase</fullName>
        <ecNumber evidence="1">2.3.1.16</ecNumber>
    </recommendedName>
    <alternativeName>
        <fullName evidence="1">ACSs</fullName>
    </alternativeName>
    <alternativeName>
        <fullName evidence="1">Acetyl-CoA acyltransferase</fullName>
    </alternativeName>
    <alternativeName>
        <fullName evidence="1">Acyl-CoA ligase</fullName>
    </alternativeName>
    <alternativeName>
        <fullName evidence="1">Beta-ketothiolase</fullName>
    </alternativeName>
    <alternativeName>
        <fullName evidence="1">Fatty acid oxidation complex subunit beta</fullName>
    </alternativeName>
</protein>
<name>FADI_SHIDS</name>
<accession>Q32DJ3</accession>
<organism>
    <name type="scientific">Shigella dysenteriae serotype 1 (strain Sd197)</name>
    <dbReference type="NCBI Taxonomy" id="300267"/>
    <lineage>
        <taxon>Bacteria</taxon>
        <taxon>Pseudomonadati</taxon>
        <taxon>Pseudomonadota</taxon>
        <taxon>Gammaproteobacteria</taxon>
        <taxon>Enterobacterales</taxon>
        <taxon>Enterobacteriaceae</taxon>
        <taxon>Shigella</taxon>
    </lineage>
</organism>
<dbReference type="EC" id="2.3.1.16" evidence="1"/>
<dbReference type="EMBL" id="CP000034">
    <property type="protein sequence ID" value="ABB62612.1"/>
    <property type="molecule type" value="Genomic_DNA"/>
</dbReference>
<dbReference type="RefSeq" id="WP_000531962.1">
    <property type="nucleotide sequence ID" value="NC_007606.1"/>
</dbReference>
<dbReference type="RefSeq" id="YP_404103.1">
    <property type="nucleotide sequence ID" value="NC_007606.1"/>
</dbReference>
<dbReference type="SMR" id="Q32DJ3"/>
<dbReference type="STRING" id="300267.SDY_2543"/>
<dbReference type="EnsemblBacteria" id="ABB62612">
    <property type="protein sequence ID" value="ABB62612"/>
    <property type="gene ID" value="SDY_2543"/>
</dbReference>
<dbReference type="KEGG" id="sdy:SDY_2543"/>
<dbReference type="PATRIC" id="fig|300267.13.peg.3061"/>
<dbReference type="HOGENOM" id="CLU_031026_2_0_6"/>
<dbReference type="UniPathway" id="UPA00659"/>
<dbReference type="Proteomes" id="UP000002716">
    <property type="component" value="Chromosome"/>
</dbReference>
<dbReference type="GO" id="GO:0005829">
    <property type="term" value="C:cytosol"/>
    <property type="evidence" value="ECO:0007669"/>
    <property type="project" value="TreeGrafter"/>
</dbReference>
<dbReference type="GO" id="GO:0003988">
    <property type="term" value="F:acetyl-CoA C-acyltransferase activity"/>
    <property type="evidence" value="ECO:0007669"/>
    <property type="project" value="UniProtKB-UniRule"/>
</dbReference>
<dbReference type="GO" id="GO:0006635">
    <property type="term" value="P:fatty acid beta-oxidation"/>
    <property type="evidence" value="ECO:0007669"/>
    <property type="project" value="UniProtKB-UniRule"/>
</dbReference>
<dbReference type="CDD" id="cd00751">
    <property type="entry name" value="thiolase"/>
    <property type="match status" value="1"/>
</dbReference>
<dbReference type="FunFam" id="3.40.47.10:FF:000011">
    <property type="entry name" value="3-ketoacyl-CoA thiolase"/>
    <property type="match status" value="1"/>
</dbReference>
<dbReference type="Gene3D" id="3.40.47.10">
    <property type="match status" value="1"/>
</dbReference>
<dbReference type="HAMAP" id="MF_01618">
    <property type="entry name" value="FadI"/>
    <property type="match status" value="1"/>
</dbReference>
<dbReference type="InterPro" id="IPR012806">
    <property type="entry name" value="Ac-CoA_C-AcTrfase_FadI"/>
</dbReference>
<dbReference type="InterPro" id="IPR002155">
    <property type="entry name" value="Thiolase"/>
</dbReference>
<dbReference type="InterPro" id="IPR016039">
    <property type="entry name" value="Thiolase-like"/>
</dbReference>
<dbReference type="InterPro" id="IPR020615">
    <property type="entry name" value="Thiolase_acyl_enz_int_AS"/>
</dbReference>
<dbReference type="InterPro" id="IPR020610">
    <property type="entry name" value="Thiolase_AS"/>
</dbReference>
<dbReference type="InterPro" id="IPR020617">
    <property type="entry name" value="Thiolase_C"/>
</dbReference>
<dbReference type="InterPro" id="IPR020613">
    <property type="entry name" value="Thiolase_CS"/>
</dbReference>
<dbReference type="InterPro" id="IPR020616">
    <property type="entry name" value="Thiolase_N"/>
</dbReference>
<dbReference type="NCBIfam" id="TIGR01930">
    <property type="entry name" value="AcCoA-C-Actrans"/>
    <property type="match status" value="1"/>
</dbReference>
<dbReference type="NCBIfam" id="TIGR02446">
    <property type="entry name" value="FadI"/>
    <property type="match status" value="1"/>
</dbReference>
<dbReference type="NCBIfam" id="NF006516">
    <property type="entry name" value="PRK08963.1"/>
    <property type="match status" value="1"/>
</dbReference>
<dbReference type="PANTHER" id="PTHR18919:SF107">
    <property type="entry name" value="ACETYL-COA ACETYLTRANSFERASE, CYTOSOLIC"/>
    <property type="match status" value="1"/>
</dbReference>
<dbReference type="PANTHER" id="PTHR18919">
    <property type="entry name" value="ACETYL-COA C-ACYLTRANSFERASE"/>
    <property type="match status" value="1"/>
</dbReference>
<dbReference type="Pfam" id="PF02803">
    <property type="entry name" value="Thiolase_C"/>
    <property type="match status" value="1"/>
</dbReference>
<dbReference type="Pfam" id="PF00108">
    <property type="entry name" value="Thiolase_N"/>
    <property type="match status" value="1"/>
</dbReference>
<dbReference type="PIRSF" id="PIRSF000429">
    <property type="entry name" value="Ac-CoA_Ac_transf"/>
    <property type="match status" value="1"/>
</dbReference>
<dbReference type="SUPFAM" id="SSF53901">
    <property type="entry name" value="Thiolase-like"/>
    <property type="match status" value="2"/>
</dbReference>
<dbReference type="PROSITE" id="PS00098">
    <property type="entry name" value="THIOLASE_1"/>
    <property type="match status" value="1"/>
</dbReference>
<dbReference type="PROSITE" id="PS00737">
    <property type="entry name" value="THIOLASE_2"/>
    <property type="match status" value="1"/>
</dbReference>
<dbReference type="PROSITE" id="PS00099">
    <property type="entry name" value="THIOLASE_3"/>
    <property type="match status" value="1"/>
</dbReference>
<evidence type="ECO:0000255" key="1">
    <source>
        <dbReference type="HAMAP-Rule" id="MF_01618"/>
    </source>
</evidence>
<comment type="function">
    <text evidence="1">Catalyzes the final step of fatty acid oxidation in which acetyl-CoA is released and the CoA ester of a fatty acid two carbons shorter is formed.</text>
</comment>
<comment type="catalytic activity">
    <reaction evidence="1">
        <text>an acyl-CoA + acetyl-CoA = a 3-oxoacyl-CoA + CoA</text>
        <dbReference type="Rhea" id="RHEA:21564"/>
        <dbReference type="ChEBI" id="CHEBI:57287"/>
        <dbReference type="ChEBI" id="CHEBI:57288"/>
        <dbReference type="ChEBI" id="CHEBI:58342"/>
        <dbReference type="ChEBI" id="CHEBI:90726"/>
        <dbReference type="EC" id="2.3.1.16"/>
    </reaction>
</comment>
<comment type="pathway">
    <text evidence="1">Lipid metabolism; fatty acid beta-oxidation.</text>
</comment>
<comment type="subunit">
    <text evidence="1">Heterotetramer of two alpha chains (FadJ) and two beta chains (FadI).</text>
</comment>
<comment type="subcellular location">
    <subcellularLocation>
        <location evidence="1">Cytoplasm</location>
    </subcellularLocation>
</comment>
<comment type="similarity">
    <text evidence="1">Belongs to the thiolase-like superfamily. Thiolase family.</text>
</comment>
<gene>
    <name evidence="1" type="primary">fadI</name>
    <name type="ordered locus">SDY_2543</name>
</gene>
<proteinExistence type="inferred from homology"/>
<keyword id="KW-0012">Acyltransferase</keyword>
<keyword id="KW-0963">Cytoplasm</keyword>
<keyword id="KW-0276">Fatty acid metabolism</keyword>
<keyword id="KW-0442">Lipid degradation</keyword>
<keyword id="KW-0443">Lipid metabolism</keyword>
<keyword id="KW-1185">Reference proteome</keyword>
<keyword id="KW-0808">Transferase</keyword>
<reference key="1">
    <citation type="journal article" date="2005" name="Nucleic Acids Res.">
        <title>Genome dynamics and diversity of Shigella species, the etiologic agents of bacillary dysentery.</title>
        <authorList>
            <person name="Yang F."/>
            <person name="Yang J."/>
            <person name="Zhang X."/>
            <person name="Chen L."/>
            <person name="Jiang Y."/>
            <person name="Yan Y."/>
            <person name="Tang X."/>
            <person name="Wang J."/>
            <person name="Xiong Z."/>
            <person name="Dong J."/>
            <person name="Xue Y."/>
            <person name="Zhu Y."/>
            <person name="Xu X."/>
            <person name="Sun L."/>
            <person name="Chen S."/>
            <person name="Nie H."/>
            <person name="Peng J."/>
            <person name="Xu J."/>
            <person name="Wang Y."/>
            <person name="Yuan Z."/>
            <person name="Wen Y."/>
            <person name="Yao Z."/>
            <person name="Shen Y."/>
            <person name="Qiang B."/>
            <person name="Hou Y."/>
            <person name="Yu J."/>
            <person name="Jin Q."/>
        </authorList>
    </citation>
    <scope>NUCLEOTIDE SEQUENCE [LARGE SCALE GENOMIC DNA]</scope>
    <source>
        <strain>Sd197</strain>
    </source>
</reference>
<feature type="chain" id="PRO_1000069518" description="3-ketoacyl-CoA thiolase">
    <location>
        <begin position="1"/>
        <end position="436"/>
    </location>
</feature>
<feature type="active site" description="Acyl-thioester intermediate" evidence="1">
    <location>
        <position position="99"/>
    </location>
</feature>
<feature type="active site" description="Proton acceptor" evidence="1">
    <location>
        <position position="392"/>
    </location>
</feature>
<feature type="active site" description="Proton acceptor" evidence="1">
    <location>
        <position position="422"/>
    </location>
</feature>